<dbReference type="EC" id="2.3.1.234" evidence="1"/>
<dbReference type="EMBL" id="CP001396">
    <property type="protein sequence ID" value="ACR64785.1"/>
    <property type="molecule type" value="Genomic_DNA"/>
</dbReference>
<dbReference type="RefSeq" id="WP_001264352.1">
    <property type="nucleotide sequence ID" value="NC_012759.1"/>
</dbReference>
<dbReference type="SMR" id="C4ZQY1"/>
<dbReference type="GeneID" id="75173186"/>
<dbReference type="KEGG" id="ebw:BWG_2775"/>
<dbReference type="HOGENOM" id="CLU_023208_0_2_6"/>
<dbReference type="GO" id="GO:0005737">
    <property type="term" value="C:cytoplasm"/>
    <property type="evidence" value="ECO:0007669"/>
    <property type="project" value="UniProtKB-SubCell"/>
</dbReference>
<dbReference type="GO" id="GO:0005506">
    <property type="term" value="F:iron ion binding"/>
    <property type="evidence" value="ECO:0007669"/>
    <property type="project" value="UniProtKB-UniRule"/>
</dbReference>
<dbReference type="GO" id="GO:0061711">
    <property type="term" value="F:N(6)-L-threonylcarbamoyladenine synthase activity"/>
    <property type="evidence" value="ECO:0007669"/>
    <property type="project" value="UniProtKB-EC"/>
</dbReference>
<dbReference type="GO" id="GO:0002949">
    <property type="term" value="P:tRNA threonylcarbamoyladenosine modification"/>
    <property type="evidence" value="ECO:0007669"/>
    <property type="project" value="UniProtKB-UniRule"/>
</dbReference>
<dbReference type="CDD" id="cd24097">
    <property type="entry name" value="ASKHA_NBD_TsaD-like"/>
    <property type="match status" value="1"/>
</dbReference>
<dbReference type="FunFam" id="3.30.420.40:FF:000031">
    <property type="entry name" value="tRNA N6-adenosine threonylcarbamoyltransferase"/>
    <property type="match status" value="1"/>
</dbReference>
<dbReference type="Gene3D" id="3.30.420.40">
    <property type="match status" value="2"/>
</dbReference>
<dbReference type="HAMAP" id="MF_01445">
    <property type="entry name" value="TsaD"/>
    <property type="match status" value="1"/>
</dbReference>
<dbReference type="InterPro" id="IPR043129">
    <property type="entry name" value="ATPase_NBD"/>
</dbReference>
<dbReference type="InterPro" id="IPR000905">
    <property type="entry name" value="Gcp-like_dom"/>
</dbReference>
<dbReference type="InterPro" id="IPR017861">
    <property type="entry name" value="KAE1/TsaD"/>
</dbReference>
<dbReference type="InterPro" id="IPR017860">
    <property type="entry name" value="Peptidase_M22_CS"/>
</dbReference>
<dbReference type="InterPro" id="IPR022450">
    <property type="entry name" value="TsaD"/>
</dbReference>
<dbReference type="NCBIfam" id="TIGR00329">
    <property type="entry name" value="gcp_kae1"/>
    <property type="match status" value="1"/>
</dbReference>
<dbReference type="NCBIfam" id="TIGR03723">
    <property type="entry name" value="T6A_TsaD_YgjD"/>
    <property type="match status" value="1"/>
</dbReference>
<dbReference type="PANTHER" id="PTHR11735">
    <property type="entry name" value="TRNA N6-ADENOSINE THREONYLCARBAMOYLTRANSFERASE"/>
    <property type="match status" value="1"/>
</dbReference>
<dbReference type="PANTHER" id="PTHR11735:SF6">
    <property type="entry name" value="TRNA N6-ADENOSINE THREONYLCARBAMOYLTRANSFERASE, MITOCHONDRIAL"/>
    <property type="match status" value="1"/>
</dbReference>
<dbReference type="Pfam" id="PF00814">
    <property type="entry name" value="TsaD"/>
    <property type="match status" value="1"/>
</dbReference>
<dbReference type="PRINTS" id="PR00789">
    <property type="entry name" value="OSIALOPTASE"/>
</dbReference>
<dbReference type="SUPFAM" id="SSF53067">
    <property type="entry name" value="Actin-like ATPase domain"/>
    <property type="match status" value="1"/>
</dbReference>
<dbReference type="PROSITE" id="PS01016">
    <property type="entry name" value="GLYCOPROTEASE"/>
    <property type="match status" value="1"/>
</dbReference>
<reference key="1">
    <citation type="journal article" date="2009" name="J. Bacteriol.">
        <title>Genomic sequencing reveals regulatory mutations and recombinational events in the widely used MC4100 lineage of Escherichia coli K-12.</title>
        <authorList>
            <person name="Ferenci T."/>
            <person name="Zhou Z."/>
            <person name="Betteridge T."/>
            <person name="Ren Y."/>
            <person name="Liu Y."/>
            <person name="Feng L."/>
            <person name="Reeves P.R."/>
            <person name="Wang L."/>
        </authorList>
    </citation>
    <scope>NUCLEOTIDE SEQUENCE [LARGE SCALE GENOMIC DNA]</scope>
    <source>
        <strain>K12 / MC4100 / BW2952</strain>
    </source>
</reference>
<accession>C4ZQY1</accession>
<proteinExistence type="inferred from homology"/>
<keyword id="KW-0012">Acyltransferase</keyword>
<keyword id="KW-0963">Cytoplasm</keyword>
<keyword id="KW-0408">Iron</keyword>
<keyword id="KW-0479">Metal-binding</keyword>
<keyword id="KW-0808">Transferase</keyword>
<keyword id="KW-0819">tRNA processing</keyword>
<gene>
    <name evidence="1" type="primary">tsaD</name>
    <name type="synonym">gcp</name>
    <name type="ordered locus">BWG_2775</name>
</gene>
<evidence type="ECO:0000255" key="1">
    <source>
        <dbReference type="HAMAP-Rule" id="MF_01445"/>
    </source>
</evidence>
<feature type="chain" id="PRO_1000215298" description="tRNA N6-adenosine threonylcarbamoyltransferase">
    <location>
        <begin position="1"/>
        <end position="337"/>
    </location>
</feature>
<feature type="binding site" evidence="1">
    <location>
        <position position="111"/>
    </location>
    <ligand>
        <name>Fe cation</name>
        <dbReference type="ChEBI" id="CHEBI:24875"/>
    </ligand>
</feature>
<feature type="binding site" evidence="1">
    <location>
        <position position="115"/>
    </location>
    <ligand>
        <name>Fe cation</name>
        <dbReference type="ChEBI" id="CHEBI:24875"/>
    </ligand>
</feature>
<feature type="binding site" evidence="1">
    <location>
        <begin position="134"/>
        <end position="138"/>
    </location>
    <ligand>
        <name>substrate</name>
    </ligand>
</feature>
<feature type="binding site" evidence="1">
    <location>
        <position position="167"/>
    </location>
    <ligand>
        <name>substrate</name>
    </ligand>
</feature>
<feature type="binding site" evidence="1">
    <location>
        <position position="180"/>
    </location>
    <ligand>
        <name>substrate</name>
    </ligand>
</feature>
<feature type="binding site" evidence="1">
    <location>
        <position position="272"/>
    </location>
    <ligand>
        <name>substrate</name>
    </ligand>
</feature>
<feature type="binding site" evidence="1">
    <location>
        <position position="300"/>
    </location>
    <ligand>
        <name>Fe cation</name>
        <dbReference type="ChEBI" id="CHEBI:24875"/>
    </ligand>
</feature>
<organism>
    <name type="scientific">Escherichia coli (strain K12 / MC4100 / BW2952)</name>
    <dbReference type="NCBI Taxonomy" id="595496"/>
    <lineage>
        <taxon>Bacteria</taxon>
        <taxon>Pseudomonadati</taxon>
        <taxon>Pseudomonadota</taxon>
        <taxon>Gammaproteobacteria</taxon>
        <taxon>Enterobacterales</taxon>
        <taxon>Enterobacteriaceae</taxon>
        <taxon>Escherichia</taxon>
    </lineage>
</organism>
<comment type="function">
    <text evidence="1">Required for the formation of a threonylcarbamoyl group on adenosine at position 37 (t(6)A37) in tRNAs that read codons beginning with adenine. Is involved in the transfer of the threonylcarbamoyl moiety of threonylcarbamoyl-AMP (TC-AMP) to the N6 group of A37, together with TsaE and TsaB. TsaD likely plays a direct catalytic role in this reaction.</text>
</comment>
<comment type="catalytic activity">
    <reaction evidence="1">
        <text>L-threonylcarbamoyladenylate + adenosine(37) in tRNA = N(6)-L-threonylcarbamoyladenosine(37) in tRNA + AMP + H(+)</text>
        <dbReference type="Rhea" id="RHEA:37059"/>
        <dbReference type="Rhea" id="RHEA-COMP:10162"/>
        <dbReference type="Rhea" id="RHEA-COMP:10163"/>
        <dbReference type="ChEBI" id="CHEBI:15378"/>
        <dbReference type="ChEBI" id="CHEBI:73682"/>
        <dbReference type="ChEBI" id="CHEBI:74411"/>
        <dbReference type="ChEBI" id="CHEBI:74418"/>
        <dbReference type="ChEBI" id="CHEBI:456215"/>
        <dbReference type="EC" id="2.3.1.234"/>
    </reaction>
</comment>
<comment type="cofactor">
    <cofactor evidence="1">
        <name>Fe(2+)</name>
        <dbReference type="ChEBI" id="CHEBI:29033"/>
    </cofactor>
    <text evidence="1">Binds 1 Fe(2+) ion per subunit.</text>
</comment>
<comment type="subcellular location">
    <subcellularLocation>
        <location evidence="1">Cytoplasm</location>
    </subcellularLocation>
</comment>
<comment type="similarity">
    <text evidence="1">Belongs to the KAE1 / TsaD family.</text>
</comment>
<protein>
    <recommendedName>
        <fullName evidence="1">tRNA N6-adenosine threonylcarbamoyltransferase</fullName>
        <ecNumber evidence="1">2.3.1.234</ecNumber>
    </recommendedName>
    <alternativeName>
        <fullName evidence="1">N6-L-threonylcarbamoyladenine synthase</fullName>
        <shortName evidence="1">t(6)A synthase</shortName>
    </alternativeName>
    <alternativeName>
        <fullName evidence="1">t(6)A37 threonylcarbamoyladenosine biosynthesis protein TsaD</fullName>
    </alternativeName>
    <alternativeName>
        <fullName evidence="1">tRNA threonylcarbamoyladenosine biosynthesis protein TsaD</fullName>
    </alternativeName>
</protein>
<name>TSAD_ECOBW</name>
<sequence length="337" mass="36008">MRVLGIETSCDETGIAIYDDEKGLLANQLYSQVKLHADYGGVVPELASRDHVRKTVPLIQAALKESGLTAKDIDAVAYTAGPGLVGALLVGATVGRSLAFAWDVPAIPVHHMEGHLLAPMLEDNPPEFPFVALLVSGGHTQLISVTGIGQYELLGESIDDAAGEAFDKTAKLLGLDYPGGPLLSKMAAQGTAGRFVFPRPMTDRPGLDFSFSGLKTFAANTIRDNGTDDQTRADIARAFEDAVVDTLMIKCKRALDQTGFKRLVMAGGVSANRTLRAKLAEMMKKRRGEVFYARPEFCTDNGAMIAYAGMVRFKAGATADLGVSVRPRWPLAELPAA</sequence>